<name>TTC19_DANRE</name>
<comment type="function">
    <text evidence="1">Required for the preservation of the structural and functional integrity of mitochondrial respiratory complex III by allowing the physiological turnover of the Rieske protein UQCRFS1. Involved in the clearance of UQCRFS1 N-terminal fragments, which are produced upon incorporation into the complex III and whose presence is detrimental for its catalytic activity.</text>
</comment>
<comment type="subunit">
    <text evidence="1 2">Binds to the mature mitochondrial complex III dimer, after the incorporation of the Rieske protein (UQCRFS1). Interacts with UQCRC1 and UQCRFS1 (By similarity). Interacts with ZFYVE26 and CHMP4B.</text>
</comment>
<comment type="subcellular location">
    <subcellularLocation>
        <location evidence="1">Mitochondrion inner membrane</location>
    </subcellularLocation>
</comment>
<comment type="similarity">
    <text evidence="4">Belongs to the TTC19 family.</text>
</comment>
<comment type="sequence caution" evidence="4">
    <conflict type="erroneous initiation">
        <sequence resource="EMBL-CDS" id="AAI39681"/>
    </conflict>
    <text>Extended N-terminus.</text>
</comment>
<reference key="1">
    <citation type="submission" date="2007-04" db="EMBL/GenBank/DDBJ databases">
        <authorList>
            <consortium name="NIH - Zebrafish Gene Collection (ZGC) project"/>
        </authorList>
    </citation>
    <scope>NUCLEOTIDE SEQUENCE [LARGE SCALE MRNA]</scope>
    <source>
        <tissue>Ovary</tissue>
    </source>
</reference>
<dbReference type="EMBL" id="BC139680">
    <property type="protein sequence ID" value="AAI39681.1"/>
    <property type="status" value="ALT_INIT"/>
    <property type="molecule type" value="mRNA"/>
</dbReference>
<dbReference type="SMR" id="A4QP73"/>
<dbReference type="FunCoup" id="A4QP73">
    <property type="interactions" value="1181"/>
</dbReference>
<dbReference type="STRING" id="7955.ENSDARP00000102293"/>
<dbReference type="PaxDb" id="7955-ENSDARP00000102293"/>
<dbReference type="PeptideAtlas" id="A4QP73"/>
<dbReference type="AGR" id="ZFIN:ZDB-GENE-070912-490"/>
<dbReference type="ZFIN" id="ZDB-GENE-070912-490">
    <property type="gene designation" value="ttc19"/>
</dbReference>
<dbReference type="eggNOG" id="KOG1840">
    <property type="taxonomic scope" value="Eukaryota"/>
</dbReference>
<dbReference type="InParanoid" id="A4QP73"/>
<dbReference type="Reactome" id="R-DRE-9865881">
    <property type="pathway name" value="Complex III assembly"/>
</dbReference>
<dbReference type="PRO" id="PR:A4QP73"/>
<dbReference type="Proteomes" id="UP000000437">
    <property type="component" value="Unplaced"/>
</dbReference>
<dbReference type="GO" id="GO:0005743">
    <property type="term" value="C:mitochondrial inner membrane"/>
    <property type="evidence" value="ECO:0000250"/>
    <property type="project" value="UniProtKB"/>
</dbReference>
<dbReference type="GO" id="GO:0051301">
    <property type="term" value="P:cell division"/>
    <property type="evidence" value="ECO:0007669"/>
    <property type="project" value="UniProtKB-KW"/>
</dbReference>
<dbReference type="GO" id="GO:0034551">
    <property type="term" value="P:mitochondrial respiratory chain complex III assembly"/>
    <property type="evidence" value="ECO:0000250"/>
    <property type="project" value="UniProtKB"/>
</dbReference>
<dbReference type="FunFam" id="1.25.40.10:FF:001428">
    <property type="entry name" value="Tetratricopeptide repeat protein 19, mitochondrial"/>
    <property type="match status" value="1"/>
</dbReference>
<dbReference type="Gene3D" id="1.25.40.10">
    <property type="entry name" value="Tetratricopeptide repeat domain"/>
    <property type="match status" value="2"/>
</dbReference>
<dbReference type="InterPro" id="IPR011990">
    <property type="entry name" value="TPR-like_helical_dom_sf"/>
</dbReference>
<dbReference type="InterPro" id="IPR019734">
    <property type="entry name" value="TPR_rpt"/>
</dbReference>
<dbReference type="InterPro" id="IPR040395">
    <property type="entry name" value="TTC19"/>
</dbReference>
<dbReference type="PANTHER" id="PTHR13143">
    <property type="entry name" value="TETRATRICOPEPTIDE REPEAT PROTEIN 19"/>
    <property type="match status" value="1"/>
</dbReference>
<dbReference type="PANTHER" id="PTHR13143:SF6">
    <property type="entry name" value="TETRATRICOPEPTIDE REPEAT PROTEIN 19, MITOCHONDRIAL"/>
    <property type="match status" value="1"/>
</dbReference>
<dbReference type="Pfam" id="PF13424">
    <property type="entry name" value="TPR_12"/>
    <property type="match status" value="1"/>
</dbReference>
<dbReference type="Pfam" id="PF13176">
    <property type="entry name" value="TPR_7"/>
    <property type="match status" value="1"/>
</dbReference>
<dbReference type="SMART" id="SM00028">
    <property type="entry name" value="TPR"/>
    <property type="match status" value="4"/>
</dbReference>
<dbReference type="SUPFAM" id="SSF48452">
    <property type="entry name" value="TPR-like"/>
    <property type="match status" value="2"/>
</dbReference>
<dbReference type="PROSITE" id="PS50293">
    <property type="entry name" value="TPR_REGION"/>
    <property type="match status" value="1"/>
</dbReference>
<evidence type="ECO:0000250" key="1">
    <source>
        <dbReference type="UniProtKB" id="Q6DKK2"/>
    </source>
</evidence>
<evidence type="ECO:0000250" key="2">
    <source>
        <dbReference type="UniProtKB" id="Q8CC21"/>
    </source>
</evidence>
<evidence type="ECO:0000255" key="3"/>
<evidence type="ECO:0000305" key="4"/>
<feature type="transit peptide" description="Mitochondrion" evidence="3">
    <location>
        <begin position="1"/>
        <end position="67"/>
    </location>
</feature>
<feature type="chain" id="PRO_0000408355" description="Tetratricopeptide repeat protein 19, mitochondrial">
    <location>
        <begin position="68"/>
        <end position="403"/>
    </location>
</feature>
<feature type="repeat" description="TPR 1">
    <location>
        <begin position="154"/>
        <end position="187"/>
    </location>
</feature>
<feature type="repeat" description="TPR 2">
    <location>
        <begin position="297"/>
        <end position="330"/>
    </location>
</feature>
<feature type="repeat" description="TPR 3">
    <location>
        <begin position="336"/>
        <end position="369"/>
    </location>
</feature>
<proteinExistence type="evidence at transcript level"/>
<organism>
    <name type="scientific">Danio rerio</name>
    <name type="common">Zebrafish</name>
    <name type="synonym">Brachydanio rerio</name>
    <dbReference type="NCBI Taxonomy" id="7955"/>
    <lineage>
        <taxon>Eukaryota</taxon>
        <taxon>Metazoa</taxon>
        <taxon>Chordata</taxon>
        <taxon>Craniata</taxon>
        <taxon>Vertebrata</taxon>
        <taxon>Euteleostomi</taxon>
        <taxon>Actinopterygii</taxon>
        <taxon>Neopterygii</taxon>
        <taxon>Teleostei</taxon>
        <taxon>Ostariophysi</taxon>
        <taxon>Cypriniformes</taxon>
        <taxon>Danionidae</taxon>
        <taxon>Danioninae</taxon>
        <taxon>Danio</taxon>
    </lineage>
</organism>
<accession>A4QP73</accession>
<keyword id="KW-0131">Cell cycle</keyword>
<keyword id="KW-0132">Cell division</keyword>
<keyword id="KW-0249">Electron transport</keyword>
<keyword id="KW-0472">Membrane</keyword>
<keyword id="KW-0496">Mitochondrion</keyword>
<keyword id="KW-0999">Mitochondrion inner membrane</keyword>
<keyword id="KW-1185">Reference proteome</keyword>
<keyword id="KW-0677">Repeat</keyword>
<keyword id="KW-0679">Respiratory chain</keyword>
<keyword id="KW-0802">TPR repeat</keyword>
<keyword id="KW-0809">Transit peptide</keyword>
<keyword id="KW-0813">Transport</keyword>
<protein>
    <recommendedName>
        <fullName>Tetratricopeptide repeat protein 19, mitochondrial</fullName>
        <shortName>TPR repeat protein 19</shortName>
    </recommendedName>
</protein>
<gene>
    <name type="primary">ttc19</name>
</gene>
<sequence length="403" mass="45132">MALRSYCRQLAAQVFRLKLCGNECPRNAPGCSFSLAGIKSLHEPTGVLARSSRCVKRWHRRSWHRCASLQMPSQKSHSDTTDFSRWTLAWGAVAFSLFGGSDEKTEEQKLEDELILLLKKAKYSMMIGELDAADGFLHRAVRLAHQMHNNDAIIYTYSLMANLAFVRGQLDNAEKLFKAAMSFMLSGGTPQDDNALIEMSLKLASIYATQNKNELAEHGFQFCTDSLEAKMDKQKDLPPESLSDEERKDTRLLLGLSLDARARYLAANHRFIGACRDYRHALQICQEEQGESHPQTLVLMSDLATVLDLRGKHDEALVYVKKAVELGQAAGHPEQHVLLGNMAGILMHNGEFEESAKLYQEALALAHTAGDAEAIEQLQEGLKELDNRRNAKDNSKVEDELKE</sequence>